<name>CH60_BACVZ</name>
<dbReference type="EC" id="5.6.1.7" evidence="1"/>
<dbReference type="EMBL" id="CP000560">
    <property type="protein sequence ID" value="ABS73033.1"/>
    <property type="molecule type" value="Genomic_DNA"/>
</dbReference>
<dbReference type="RefSeq" id="WP_003155941.1">
    <property type="nucleotide sequence ID" value="NC_009725.2"/>
</dbReference>
<dbReference type="SMR" id="A7Z207"/>
<dbReference type="GeneID" id="93079783"/>
<dbReference type="KEGG" id="bay:RBAM_006480"/>
<dbReference type="HOGENOM" id="CLU_016503_3_0_9"/>
<dbReference type="Proteomes" id="UP000001120">
    <property type="component" value="Chromosome"/>
</dbReference>
<dbReference type="GO" id="GO:0005737">
    <property type="term" value="C:cytoplasm"/>
    <property type="evidence" value="ECO:0007669"/>
    <property type="project" value="UniProtKB-SubCell"/>
</dbReference>
<dbReference type="GO" id="GO:0005524">
    <property type="term" value="F:ATP binding"/>
    <property type="evidence" value="ECO:0007669"/>
    <property type="project" value="UniProtKB-UniRule"/>
</dbReference>
<dbReference type="GO" id="GO:0140662">
    <property type="term" value="F:ATP-dependent protein folding chaperone"/>
    <property type="evidence" value="ECO:0007669"/>
    <property type="project" value="InterPro"/>
</dbReference>
<dbReference type="GO" id="GO:0016853">
    <property type="term" value="F:isomerase activity"/>
    <property type="evidence" value="ECO:0007669"/>
    <property type="project" value="UniProtKB-KW"/>
</dbReference>
<dbReference type="GO" id="GO:0051082">
    <property type="term" value="F:unfolded protein binding"/>
    <property type="evidence" value="ECO:0007669"/>
    <property type="project" value="UniProtKB-UniRule"/>
</dbReference>
<dbReference type="GO" id="GO:0042026">
    <property type="term" value="P:protein refolding"/>
    <property type="evidence" value="ECO:0007669"/>
    <property type="project" value="UniProtKB-UniRule"/>
</dbReference>
<dbReference type="CDD" id="cd03344">
    <property type="entry name" value="GroEL"/>
    <property type="match status" value="1"/>
</dbReference>
<dbReference type="FunFam" id="1.10.560.10:FF:000001">
    <property type="entry name" value="60 kDa chaperonin"/>
    <property type="match status" value="1"/>
</dbReference>
<dbReference type="FunFam" id="3.50.7.10:FF:000001">
    <property type="entry name" value="60 kDa chaperonin"/>
    <property type="match status" value="1"/>
</dbReference>
<dbReference type="Gene3D" id="3.50.7.10">
    <property type="entry name" value="GroEL"/>
    <property type="match status" value="1"/>
</dbReference>
<dbReference type="Gene3D" id="1.10.560.10">
    <property type="entry name" value="GroEL-like equatorial domain"/>
    <property type="match status" value="1"/>
</dbReference>
<dbReference type="Gene3D" id="3.30.260.10">
    <property type="entry name" value="TCP-1-like chaperonin intermediate domain"/>
    <property type="match status" value="1"/>
</dbReference>
<dbReference type="HAMAP" id="MF_00600">
    <property type="entry name" value="CH60"/>
    <property type="match status" value="1"/>
</dbReference>
<dbReference type="InterPro" id="IPR018370">
    <property type="entry name" value="Chaperonin_Cpn60_CS"/>
</dbReference>
<dbReference type="InterPro" id="IPR001844">
    <property type="entry name" value="Cpn60/GroEL"/>
</dbReference>
<dbReference type="InterPro" id="IPR002423">
    <property type="entry name" value="Cpn60/GroEL/TCP-1"/>
</dbReference>
<dbReference type="InterPro" id="IPR027409">
    <property type="entry name" value="GroEL-like_apical_dom_sf"/>
</dbReference>
<dbReference type="InterPro" id="IPR027413">
    <property type="entry name" value="GROEL-like_equatorial_sf"/>
</dbReference>
<dbReference type="InterPro" id="IPR027410">
    <property type="entry name" value="TCP-1-like_intermed_sf"/>
</dbReference>
<dbReference type="NCBIfam" id="TIGR02348">
    <property type="entry name" value="GroEL"/>
    <property type="match status" value="1"/>
</dbReference>
<dbReference type="NCBIfam" id="NF000592">
    <property type="entry name" value="PRK00013.1"/>
    <property type="match status" value="1"/>
</dbReference>
<dbReference type="NCBIfam" id="NF009487">
    <property type="entry name" value="PRK12849.1"/>
    <property type="match status" value="1"/>
</dbReference>
<dbReference type="NCBIfam" id="NF009488">
    <property type="entry name" value="PRK12850.1"/>
    <property type="match status" value="1"/>
</dbReference>
<dbReference type="NCBIfam" id="NF009489">
    <property type="entry name" value="PRK12851.1"/>
    <property type="match status" value="1"/>
</dbReference>
<dbReference type="PANTHER" id="PTHR45633">
    <property type="entry name" value="60 KDA HEAT SHOCK PROTEIN, MITOCHONDRIAL"/>
    <property type="match status" value="1"/>
</dbReference>
<dbReference type="Pfam" id="PF00118">
    <property type="entry name" value="Cpn60_TCP1"/>
    <property type="match status" value="1"/>
</dbReference>
<dbReference type="PRINTS" id="PR00298">
    <property type="entry name" value="CHAPERONIN60"/>
</dbReference>
<dbReference type="SUPFAM" id="SSF52029">
    <property type="entry name" value="GroEL apical domain-like"/>
    <property type="match status" value="1"/>
</dbReference>
<dbReference type="SUPFAM" id="SSF48592">
    <property type="entry name" value="GroEL equatorial domain-like"/>
    <property type="match status" value="1"/>
</dbReference>
<dbReference type="SUPFAM" id="SSF54849">
    <property type="entry name" value="GroEL-intermediate domain like"/>
    <property type="match status" value="1"/>
</dbReference>
<dbReference type="PROSITE" id="PS00296">
    <property type="entry name" value="CHAPERONINS_CPN60"/>
    <property type="match status" value="1"/>
</dbReference>
<keyword id="KW-0067">ATP-binding</keyword>
<keyword id="KW-0143">Chaperone</keyword>
<keyword id="KW-0963">Cytoplasm</keyword>
<keyword id="KW-0413">Isomerase</keyword>
<keyword id="KW-0547">Nucleotide-binding</keyword>
<accession>A7Z207</accession>
<organism>
    <name type="scientific">Bacillus velezensis (strain DSM 23117 / BGSC 10A6 / LMG 26770 / FZB42)</name>
    <name type="common">Bacillus amyloliquefaciens subsp. plantarum</name>
    <dbReference type="NCBI Taxonomy" id="326423"/>
    <lineage>
        <taxon>Bacteria</taxon>
        <taxon>Bacillati</taxon>
        <taxon>Bacillota</taxon>
        <taxon>Bacilli</taxon>
        <taxon>Bacillales</taxon>
        <taxon>Bacillaceae</taxon>
        <taxon>Bacillus</taxon>
        <taxon>Bacillus amyloliquefaciens group</taxon>
    </lineage>
</organism>
<feature type="chain" id="PRO_1000025751" description="Chaperonin GroEL">
    <location>
        <begin position="1"/>
        <end position="544"/>
    </location>
</feature>
<feature type="binding site" evidence="1">
    <location>
        <begin position="29"/>
        <end position="32"/>
    </location>
    <ligand>
        <name>ATP</name>
        <dbReference type="ChEBI" id="CHEBI:30616"/>
    </ligand>
</feature>
<feature type="binding site" evidence="1">
    <location>
        <begin position="86"/>
        <end position="90"/>
    </location>
    <ligand>
        <name>ATP</name>
        <dbReference type="ChEBI" id="CHEBI:30616"/>
    </ligand>
</feature>
<feature type="binding site" evidence="1">
    <location>
        <position position="413"/>
    </location>
    <ligand>
        <name>ATP</name>
        <dbReference type="ChEBI" id="CHEBI:30616"/>
    </ligand>
</feature>
<feature type="binding site" evidence="1">
    <location>
        <begin position="476"/>
        <end position="478"/>
    </location>
    <ligand>
        <name>ATP</name>
        <dbReference type="ChEBI" id="CHEBI:30616"/>
    </ligand>
</feature>
<feature type="binding site" evidence="1">
    <location>
        <position position="492"/>
    </location>
    <ligand>
        <name>ATP</name>
        <dbReference type="ChEBI" id="CHEBI:30616"/>
    </ligand>
</feature>
<evidence type="ECO:0000255" key="1">
    <source>
        <dbReference type="HAMAP-Rule" id="MF_00600"/>
    </source>
</evidence>
<sequence length="544" mass="57420">MAKDIKFSEEARRAMLRGVDALADAVKVTLGPKGRNVVLEKKFGSPLITNDGVTIAKEIELEDAFENMGAKLVAEVASKTNDVAGDGTTTATVLAQAMIREGLKNVTAGANPVGVRKGMEQAVTVAIENLKEISKPIEGKESIAQVAAISAADEEVGSLIAEAMERVGNDGVITIEESKGFTTELEVVEGMQFDRGYASPYMVTDSDKMEAVLDNPYILITDKKITNIQEILPVLEQVVQQGKPLLLIAEDVEGEALATLVVNKLRGTFNAVAVKAPGFGDRRKAMLEDISVLTGGEVITEDLGLDLKSTEIGQLGRASKVVVTKENTTIVEGAGDTEKIAARVNQIRAQVEETTSEFDREKLQERLAKLAGGVAVIKVGAATETELKERKLRIEDALNSTRAAVEEGIVSGGGTALVNVYNKVAAVEAEGDAQTGINIVLRALEEPIRQIAHNAGLEGSVIVERLKNEKIGVGFNAATGEWVNMIEKGIVDPTKVTRSALQNAASVAAMLLTTEAVVADKPEENAGGAGMPDMGGMGGMGGMM</sequence>
<comment type="function">
    <text evidence="1">Together with its co-chaperonin GroES, plays an essential role in assisting protein folding. The GroEL-GroES system forms a nano-cage that allows encapsulation of the non-native substrate proteins and provides a physical environment optimized to promote and accelerate protein folding.</text>
</comment>
<comment type="catalytic activity">
    <reaction evidence="1">
        <text>ATP + H2O + a folded polypeptide = ADP + phosphate + an unfolded polypeptide.</text>
        <dbReference type="EC" id="5.6.1.7"/>
    </reaction>
</comment>
<comment type="subunit">
    <text evidence="1">Forms a cylinder of 14 subunits composed of two heptameric rings stacked back-to-back. Interacts with the co-chaperonin GroES.</text>
</comment>
<comment type="subcellular location">
    <subcellularLocation>
        <location evidence="1">Cytoplasm</location>
    </subcellularLocation>
</comment>
<comment type="similarity">
    <text evidence="1">Belongs to the chaperonin (HSP60) family.</text>
</comment>
<proteinExistence type="inferred from homology"/>
<protein>
    <recommendedName>
        <fullName evidence="1">Chaperonin GroEL</fullName>
        <ecNumber evidence="1">5.6.1.7</ecNumber>
    </recommendedName>
    <alternativeName>
        <fullName evidence="1">60 kDa chaperonin</fullName>
    </alternativeName>
    <alternativeName>
        <fullName evidence="1">Chaperonin-60</fullName>
        <shortName evidence="1">Cpn60</shortName>
    </alternativeName>
</protein>
<gene>
    <name evidence="1" type="primary">groEL</name>
    <name evidence="1" type="synonym">groL</name>
    <name type="ordered locus">RBAM_006480</name>
</gene>
<reference key="1">
    <citation type="journal article" date="2007" name="Nat. Biotechnol.">
        <title>Comparative analysis of the complete genome sequence of the plant growth-promoting bacterium Bacillus amyloliquefaciens FZB42.</title>
        <authorList>
            <person name="Chen X.H."/>
            <person name="Koumoutsi A."/>
            <person name="Scholz R."/>
            <person name="Eisenreich A."/>
            <person name="Schneider K."/>
            <person name="Heinemeyer I."/>
            <person name="Morgenstern B."/>
            <person name="Voss B."/>
            <person name="Hess W.R."/>
            <person name="Reva O."/>
            <person name="Junge H."/>
            <person name="Voigt B."/>
            <person name="Jungblut P.R."/>
            <person name="Vater J."/>
            <person name="Suessmuth R."/>
            <person name="Liesegang H."/>
            <person name="Strittmatter A."/>
            <person name="Gottschalk G."/>
            <person name="Borriss R."/>
        </authorList>
    </citation>
    <scope>NUCLEOTIDE SEQUENCE [LARGE SCALE GENOMIC DNA]</scope>
    <source>
        <strain>DSM 23117 / BGSC 10A6 / LMG 26770 / FZB42</strain>
    </source>
</reference>